<dbReference type="EC" id="6.3.2.1" evidence="1"/>
<dbReference type="EMBL" id="CP000142">
    <property type="protein sequence ID" value="ABA89070.1"/>
    <property type="molecule type" value="Genomic_DNA"/>
</dbReference>
<dbReference type="RefSeq" id="WP_011341573.1">
    <property type="nucleotide sequence ID" value="NC_007498.2"/>
</dbReference>
<dbReference type="SMR" id="Q3A3I7"/>
<dbReference type="STRING" id="338963.Pcar_1829"/>
<dbReference type="KEGG" id="pca:Pcar_1829"/>
<dbReference type="eggNOG" id="COG0414">
    <property type="taxonomic scope" value="Bacteria"/>
</dbReference>
<dbReference type="HOGENOM" id="CLU_047148_0_0_7"/>
<dbReference type="OrthoDB" id="9773087at2"/>
<dbReference type="UniPathway" id="UPA00028">
    <property type="reaction ID" value="UER00005"/>
</dbReference>
<dbReference type="Proteomes" id="UP000002534">
    <property type="component" value="Chromosome"/>
</dbReference>
<dbReference type="GO" id="GO:0005829">
    <property type="term" value="C:cytosol"/>
    <property type="evidence" value="ECO:0007669"/>
    <property type="project" value="TreeGrafter"/>
</dbReference>
<dbReference type="GO" id="GO:0005524">
    <property type="term" value="F:ATP binding"/>
    <property type="evidence" value="ECO:0007669"/>
    <property type="project" value="UniProtKB-KW"/>
</dbReference>
<dbReference type="GO" id="GO:0004592">
    <property type="term" value="F:pantoate-beta-alanine ligase activity"/>
    <property type="evidence" value="ECO:0007669"/>
    <property type="project" value="UniProtKB-UniRule"/>
</dbReference>
<dbReference type="GO" id="GO:0015940">
    <property type="term" value="P:pantothenate biosynthetic process"/>
    <property type="evidence" value="ECO:0007669"/>
    <property type="project" value="UniProtKB-UniRule"/>
</dbReference>
<dbReference type="CDD" id="cd00560">
    <property type="entry name" value="PanC"/>
    <property type="match status" value="1"/>
</dbReference>
<dbReference type="FunFam" id="3.30.1300.10:FF:000001">
    <property type="entry name" value="Pantothenate synthetase"/>
    <property type="match status" value="1"/>
</dbReference>
<dbReference type="FunFam" id="3.40.50.620:FF:000013">
    <property type="entry name" value="Pantothenate synthetase"/>
    <property type="match status" value="1"/>
</dbReference>
<dbReference type="Gene3D" id="3.40.50.620">
    <property type="entry name" value="HUPs"/>
    <property type="match status" value="1"/>
</dbReference>
<dbReference type="Gene3D" id="3.30.1300.10">
    <property type="entry name" value="Pantoate-beta-alanine ligase, C-terminal domain"/>
    <property type="match status" value="1"/>
</dbReference>
<dbReference type="HAMAP" id="MF_00158">
    <property type="entry name" value="PanC"/>
    <property type="match status" value="1"/>
</dbReference>
<dbReference type="InterPro" id="IPR004821">
    <property type="entry name" value="Cyt_trans-like"/>
</dbReference>
<dbReference type="InterPro" id="IPR003721">
    <property type="entry name" value="Pantoate_ligase"/>
</dbReference>
<dbReference type="InterPro" id="IPR042176">
    <property type="entry name" value="Pantoate_ligase_C"/>
</dbReference>
<dbReference type="InterPro" id="IPR014729">
    <property type="entry name" value="Rossmann-like_a/b/a_fold"/>
</dbReference>
<dbReference type="NCBIfam" id="TIGR00125">
    <property type="entry name" value="cyt_tran_rel"/>
    <property type="match status" value="1"/>
</dbReference>
<dbReference type="NCBIfam" id="TIGR00018">
    <property type="entry name" value="panC"/>
    <property type="match status" value="1"/>
</dbReference>
<dbReference type="PANTHER" id="PTHR21299">
    <property type="entry name" value="CYTIDYLATE KINASE/PANTOATE-BETA-ALANINE LIGASE"/>
    <property type="match status" value="1"/>
</dbReference>
<dbReference type="PANTHER" id="PTHR21299:SF1">
    <property type="entry name" value="PANTOATE--BETA-ALANINE LIGASE"/>
    <property type="match status" value="1"/>
</dbReference>
<dbReference type="Pfam" id="PF02569">
    <property type="entry name" value="Pantoate_ligase"/>
    <property type="match status" value="1"/>
</dbReference>
<dbReference type="SUPFAM" id="SSF52374">
    <property type="entry name" value="Nucleotidylyl transferase"/>
    <property type="match status" value="1"/>
</dbReference>
<accession>Q3A3I7</accession>
<sequence length="283" mass="31658">MDIINDIATVQSRCLQARQAGQRIAFVPTMGYLHEGHLSLMREGRKRGDLLVASIFVNPTQFGPKEDLASYPRDLERDAELVREVGVDILFHPTPATMYPNGYKTYVHVEGLTKTLCGESRPGHFRGVTTVVCKLFNIVQPDIALFGRKDFQQLAVLRRMAADLNLPVEVVGLPTVREKDGLAMSSRNVFLSAEERKQALALVDALRQARVAAHHGEHHARRLVGLVRERIGREPDAQIDYIKICDGDTLEGVDRIDANSVLLMAVRIGQTRLIDNNYILEEV</sequence>
<name>PANC_SYNC1</name>
<feature type="chain" id="PRO_0000305506" description="Pantothenate synthetase">
    <location>
        <begin position="1"/>
        <end position="283"/>
    </location>
</feature>
<feature type="active site" description="Proton donor" evidence="1">
    <location>
        <position position="37"/>
    </location>
</feature>
<feature type="binding site" evidence="1">
    <location>
        <begin position="30"/>
        <end position="37"/>
    </location>
    <ligand>
        <name>ATP</name>
        <dbReference type="ChEBI" id="CHEBI:30616"/>
    </ligand>
</feature>
<feature type="binding site" evidence="1">
    <location>
        <position position="61"/>
    </location>
    <ligand>
        <name>(R)-pantoate</name>
        <dbReference type="ChEBI" id="CHEBI:15980"/>
    </ligand>
</feature>
<feature type="binding site" evidence="1">
    <location>
        <position position="61"/>
    </location>
    <ligand>
        <name>beta-alanine</name>
        <dbReference type="ChEBI" id="CHEBI:57966"/>
    </ligand>
</feature>
<feature type="binding site" evidence="1">
    <location>
        <begin position="147"/>
        <end position="150"/>
    </location>
    <ligand>
        <name>ATP</name>
        <dbReference type="ChEBI" id="CHEBI:30616"/>
    </ligand>
</feature>
<feature type="binding site" evidence="1">
    <location>
        <position position="153"/>
    </location>
    <ligand>
        <name>(R)-pantoate</name>
        <dbReference type="ChEBI" id="CHEBI:15980"/>
    </ligand>
</feature>
<feature type="binding site" evidence="1">
    <location>
        <position position="176"/>
    </location>
    <ligand>
        <name>ATP</name>
        <dbReference type="ChEBI" id="CHEBI:30616"/>
    </ligand>
</feature>
<feature type="binding site" evidence="1">
    <location>
        <begin position="184"/>
        <end position="187"/>
    </location>
    <ligand>
        <name>ATP</name>
        <dbReference type="ChEBI" id="CHEBI:30616"/>
    </ligand>
</feature>
<evidence type="ECO:0000255" key="1">
    <source>
        <dbReference type="HAMAP-Rule" id="MF_00158"/>
    </source>
</evidence>
<comment type="function">
    <text evidence="1">Catalyzes the condensation of pantoate with beta-alanine in an ATP-dependent reaction via a pantoyl-adenylate intermediate.</text>
</comment>
<comment type="catalytic activity">
    <reaction evidence="1">
        <text>(R)-pantoate + beta-alanine + ATP = (R)-pantothenate + AMP + diphosphate + H(+)</text>
        <dbReference type="Rhea" id="RHEA:10912"/>
        <dbReference type="ChEBI" id="CHEBI:15378"/>
        <dbReference type="ChEBI" id="CHEBI:15980"/>
        <dbReference type="ChEBI" id="CHEBI:29032"/>
        <dbReference type="ChEBI" id="CHEBI:30616"/>
        <dbReference type="ChEBI" id="CHEBI:33019"/>
        <dbReference type="ChEBI" id="CHEBI:57966"/>
        <dbReference type="ChEBI" id="CHEBI:456215"/>
        <dbReference type="EC" id="6.3.2.1"/>
    </reaction>
</comment>
<comment type="pathway">
    <text evidence="1">Cofactor biosynthesis; (R)-pantothenate biosynthesis; (R)-pantothenate from (R)-pantoate and beta-alanine: step 1/1.</text>
</comment>
<comment type="subunit">
    <text evidence="1">Homodimer.</text>
</comment>
<comment type="subcellular location">
    <subcellularLocation>
        <location evidence="1">Cytoplasm</location>
    </subcellularLocation>
</comment>
<comment type="miscellaneous">
    <text evidence="1">The reaction proceeds by a bi uni uni bi ping pong mechanism.</text>
</comment>
<comment type="similarity">
    <text evidence="1">Belongs to the pantothenate synthetase family.</text>
</comment>
<reference key="1">
    <citation type="submission" date="2005-10" db="EMBL/GenBank/DDBJ databases">
        <title>Complete sequence of Pelobacter carbinolicus DSM 2380.</title>
        <authorList>
            <person name="Copeland A."/>
            <person name="Lucas S."/>
            <person name="Lapidus A."/>
            <person name="Barry K."/>
            <person name="Detter J.C."/>
            <person name="Glavina T."/>
            <person name="Hammon N."/>
            <person name="Israni S."/>
            <person name="Pitluck S."/>
            <person name="Chertkov O."/>
            <person name="Schmutz J."/>
            <person name="Larimer F."/>
            <person name="Land M."/>
            <person name="Kyrpides N."/>
            <person name="Ivanova N."/>
            <person name="Richardson P."/>
        </authorList>
    </citation>
    <scope>NUCLEOTIDE SEQUENCE [LARGE SCALE GENOMIC DNA]</scope>
    <source>
        <strain>DSM 2380 / NBRC 103641 / GraBd1</strain>
    </source>
</reference>
<protein>
    <recommendedName>
        <fullName evidence="1">Pantothenate synthetase</fullName>
        <shortName evidence="1">PS</shortName>
        <ecNumber evidence="1">6.3.2.1</ecNumber>
    </recommendedName>
    <alternativeName>
        <fullName evidence="1">Pantoate--beta-alanine ligase</fullName>
    </alternativeName>
    <alternativeName>
        <fullName evidence="1">Pantoate-activating enzyme</fullName>
    </alternativeName>
</protein>
<keyword id="KW-0067">ATP-binding</keyword>
<keyword id="KW-0963">Cytoplasm</keyword>
<keyword id="KW-0436">Ligase</keyword>
<keyword id="KW-0547">Nucleotide-binding</keyword>
<keyword id="KW-0566">Pantothenate biosynthesis</keyword>
<keyword id="KW-1185">Reference proteome</keyword>
<gene>
    <name evidence="1" type="primary">panC</name>
    <name type="ordered locus">Pcar_1829</name>
</gene>
<proteinExistence type="inferred from homology"/>
<organism>
    <name type="scientific">Syntrophotalea carbinolica (strain DSM 2380 / NBRC 103641 / GraBd1)</name>
    <name type="common">Pelobacter carbinolicus</name>
    <dbReference type="NCBI Taxonomy" id="338963"/>
    <lineage>
        <taxon>Bacteria</taxon>
        <taxon>Pseudomonadati</taxon>
        <taxon>Thermodesulfobacteriota</taxon>
        <taxon>Desulfuromonadia</taxon>
        <taxon>Desulfuromonadales</taxon>
        <taxon>Syntrophotaleaceae</taxon>
        <taxon>Syntrophotalea</taxon>
    </lineage>
</organism>